<gene>
    <name type="primary">yafZ</name>
    <name type="ordered locus">b0252</name>
    <name type="ordered locus">JW0242</name>
</gene>
<sequence length="273" mass="31051">MTRLASRFGAANLIRRDRPLTREELFRVVPSVFSEDKHESRSERYTYIPTISLLDSLQREGFQPFFACQTRVRDPGRREHTKHMLRLRREGQITGKQVPEIILLNSHDGTSSYQMLPGLFRAVCQNGLVCGESFGEVRVPHKGDVVSQVIEGAYEVLGIFDRVEEKRDAMQSLLLPPPAQQALAKAALTYRFGEDHQPVTESQILSPRRWQDESNDLWTTYQRIQENLIKGGLSGRNAKGGRSHTRAVRGIDGDVKLNRALWVMAEALLTQLQ</sequence>
<comment type="similarity">
    <text evidence="1">Belongs to the UPF0380 family.</text>
</comment>
<comment type="sequence caution" evidence="1">
    <conflict type="erroneous initiation">
        <sequence resource="EMBL-CDS" id="AAB08671"/>
    </conflict>
    <text>Extended N-terminus.</text>
</comment>
<keyword id="KW-1185">Reference proteome</keyword>
<name>YAFZ_ECOLI</name>
<proteinExistence type="inferred from homology"/>
<reference key="1">
    <citation type="submission" date="1996-02" db="EMBL/GenBank/DDBJ databases">
        <title>Systematic sequencing of the Escherichia coli genome: analysis of the 4.0 - 6.0 min (189,987 - 281,416bp) region.</title>
        <authorList>
            <person name="Takemoto K."/>
            <person name="Mori H."/>
            <person name="Murayama N."/>
            <person name="Kataoka K."/>
            <person name="Yano M."/>
            <person name="Itoh T."/>
            <person name="Yamamoto Y."/>
            <person name="Inokuchi H."/>
            <person name="Miki T."/>
            <person name="Hatada E."/>
            <person name="Fukuda R."/>
            <person name="Ichihara S."/>
            <person name="Mizuno T."/>
            <person name="Makino K."/>
            <person name="Nakata A."/>
            <person name="Yura T."/>
            <person name="Sampei G."/>
            <person name="Mizobuchi K."/>
        </authorList>
    </citation>
    <scope>NUCLEOTIDE SEQUENCE [LARGE SCALE GENOMIC DNA]</scope>
    <source>
        <strain>K12 / W3110 / ATCC 27325 / DSM 5911</strain>
    </source>
</reference>
<reference key="2">
    <citation type="submission" date="1997-01" db="EMBL/GenBank/DDBJ databases">
        <title>Sequence of minutes 4-25 of Escherichia coli.</title>
        <authorList>
            <person name="Chung E."/>
            <person name="Allen E."/>
            <person name="Araujo R."/>
            <person name="Aparicio A.M."/>
            <person name="Davis K."/>
            <person name="Duncan M."/>
            <person name="Federspiel N."/>
            <person name="Hyman R."/>
            <person name="Kalman S."/>
            <person name="Komp C."/>
            <person name="Kurdi O."/>
            <person name="Lew H."/>
            <person name="Lin D."/>
            <person name="Namath A."/>
            <person name="Oefner P."/>
            <person name="Roberts D."/>
            <person name="Schramm S."/>
            <person name="Davis R.W."/>
        </authorList>
    </citation>
    <scope>NUCLEOTIDE SEQUENCE [LARGE SCALE GENOMIC DNA]</scope>
    <source>
        <strain>K12 / MG1655 / ATCC 47076</strain>
    </source>
</reference>
<reference key="3">
    <citation type="journal article" date="1997" name="Science">
        <title>The complete genome sequence of Escherichia coli K-12.</title>
        <authorList>
            <person name="Blattner F.R."/>
            <person name="Plunkett G. III"/>
            <person name="Bloch C.A."/>
            <person name="Perna N.T."/>
            <person name="Burland V."/>
            <person name="Riley M."/>
            <person name="Collado-Vides J."/>
            <person name="Glasner J.D."/>
            <person name="Rode C.K."/>
            <person name="Mayhew G.F."/>
            <person name="Gregor J."/>
            <person name="Davis N.W."/>
            <person name="Kirkpatrick H.A."/>
            <person name="Goeden M.A."/>
            <person name="Rose D.J."/>
            <person name="Mau B."/>
            <person name="Shao Y."/>
        </authorList>
    </citation>
    <scope>NUCLEOTIDE SEQUENCE [LARGE SCALE GENOMIC DNA]</scope>
    <source>
        <strain>K12 / MG1655 / ATCC 47076</strain>
    </source>
</reference>
<reference key="4">
    <citation type="journal article" date="2006" name="Mol. Syst. Biol.">
        <title>Highly accurate genome sequences of Escherichia coli K-12 strains MG1655 and W3110.</title>
        <authorList>
            <person name="Hayashi K."/>
            <person name="Morooka N."/>
            <person name="Yamamoto Y."/>
            <person name="Fujita K."/>
            <person name="Isono K."/>
            <person name="Choi S."/>
            <person name="Ohtsubo E."/>
            <person name="Baba T."/>
            <person name="Wanner B.L."/>
            <person name="Mori H."/>
            <person name="Horiuchi T."/>
        </authorList>
    </citation>
    <scope>NUCLEOTIDE SEQUENCE [LARGE SCALE GENOMIC DNA]</scope>
    <source>
        <strain>K12 / W3110 / ATCC 27325 / DSM 5911</strain>
    </source>
</reference>
<organism>
    <name type="scientific">Escherichia coli (strain K12)</name>
    <dbReference type="NCBI Taxonomy" id="83333"/>
    <lineage>
        <taxon>Bacteria</taxon>
        <taxon>Pseudomonadati</taxon>
        <taxon>Pseudomonadota</taxon>
        <taxon>Gammaproteobacteria</taxon>
        <taxon>Enterobacterales</taxon>
        <taxon>Enterobacteriaceae</taxon>
        <taxon>Escherichia</taxon>
    </lineage>
</organism>
<protein>
    <recommendedName>
        <fullName>UPF0380 protein YafZ</fullName>
    </recommendedName>
</protein>
<dbReference type="EMBL" id="U70214">
    <property type="protein sequence ID" value="AAB08671.1"/>
    <property type="status" value="ALT_INIT"/>
    <property type="molecule type" value="Genomic_DNA"/>
</dbReference>
<dbReference type="EMBL" id="U00096">
    <property type="protein sequence ID" value="AAC73355.2"/>
    <property type="molecule type" value="Genomic_DNA"/>
</dbReference>
<dbReference type="EMBL" id="AP009048">
    <property type="protein sequence ID" value="BAA77921.1"/>
    <property type="molecule type" value="Genomic_DNA"/>
</dbReference>
<dbReference type="PIR" id="D64750">
    <property type="entry name" value="D64750"/>
</dbReference>
<dbReference type="RefSeq" id="NP_414786.4">
    <property type="nucleotide sequence ID" value="NC_000913.3"/>
</dbReference>
<dbReference type="RefSeq" id="WP_000197389.1">
    <property type="nucleotide sequence ID" value="NZ_LN832404.1"/>
</dbReference>
<dbReference type="SMR" id="P77206"/>
<dbReference type="BioGRID" id="4259526">
    <property type="interactions" value="178"/>
</dbReference>
<dbReference type="DIP" id="DIP-11229N"/>
<dbReference type="FunCoup" id="P77206">
    <property type="interactions" value="14"/>
</dbReference>
<dbReference type="IntAct" id="P77206">
    <property type="interactions" value="3"/>
</dbReference>
<dbReference type="STRING" id="511145.b0252"/>
<dbReference type="PaxDb" id="511145-b0252"/>
<dbReference type="EnsemblBacteria" id="AAC73355">
    <property type="protein sequence ID" value="AAC73355"/>
    <property type="gene ID" value="b0252"/>
</dbReference>
<dbReference type="GeneID" id="945373"/>
<dbReference type="KEGG" id="ecj:JW0242"/>
<dbReference type="KEGG" id="eco:b0252"/>
<dbReference type="KEGG" id="ecoc:C3026_01205"/>
<dbReference type="KEGG" id="ecoc:C3026_23940"/>
<dbReference type="PATRIC" id="fig|511145.12.peg.255"/>
<dbReference type="EchoBASE" id="EB3122"/>
<dbReference type="eggNOG" id="ENOG502Z7MD">
    <property type="taxonomic scope" value="Bacteria"/>
</dbReference>
<dbReference type="HOGENOM" id="CLU_059317_0_0_6"/>
<dbReference type="InParanoid" id="P77206"/>
<dbReference type="OMA" id="YTKHMIR"/>
<dbReference type="OrthoDB" id="4554729at2"/>
<dbReference type="PhylomeDB" id="P77206"/>
<dbReference type="BioCyc" id="EcoCyc:G6127-MONOMER"/>
<dbReference type="PRO" id="PR:P77206"/>
<dbReference type="Proteomes" id="UP000000625">
    <property type="component" value="Chromosome"/>
</dbReference>
<dbReference type="InterPro" id="IPR026325">
    <property type="entry name" value="DUF932"/>
</dbReference>
<dbReference type="Pfam" id="PF06067">
    <property type="entry name" value="DUF932"/>
    <property type="match status" value="1"/>
</dbReference>
<feature type="chain" id="PRO_0000168546" description="UPF0380 protein YafZ">
    <location>
        <begin position="1"/>
        <end position="273"/>
    </location>
</feature>
<accession>P77206</accession>
<accession>Q47686</accession>
<accession>Q9R2D7</accession>
<evidence type="ECO:0000305" key="1"/>